<accession>B3PXX1</accession>
<comment type="similarity">
    <text evidence="1">Belongs to the UPF0173 family.</text>
</comment>
<organism>
    <name type="scientific">Rhizobium etli (strain CIAT 652)</name>
    <dbReference type="NCBI Taxonomy" id="491916"/>
    <lineage>
        <taxon>Bacteria</taxon>
        <taxon>Pseudomonadati</taxon>
        <taxon>Pseudomonadota</taxon>
        <taxon>Alphaproteobacteria</taxon>
        <taxon>Hyphomicrobiales</taxon>
        <taxon>Rhizobiaceae</taxon>
        <taxon>Rhizobium/Agrobacterium group</taxon>
        <taxon>Rhizobium</taxon>
    </lineage>
</organism>
<name>Y1941_RHIE6</name>
<reference key="1">
    <citation type="journal article" date="2010" name="Appl. Environ. Microbiol.">
        <title>Conserved symbiotic plasmid DNA sequences in the multireplicon pangenomic structure of Rhizobium etli.</title>
        <authorList>
            <person name="Gonzalez V."/>
            <person name="Acosta J.L."/>
            <person name="Santamaria R.I."/>
            <person name="Bustos P."/>
            <person name="Fernandez J.L."/>
            <person name="Hernandez Gonzalez I.L."/>
            <person name="Diaz R."/>
            <person name="Flores M."/>
            <person name="Palacios R."/>
            <person name="Mora J."/>
            <person name="Davila G."/>
        </authorList>
    </citation>
    <scope>NUCLEOTIDE SEQUENCE [LARGE SCALE GENOMIC DNA]</scope>
    <source>
        <strain>CIAT 652</strain>
    </source>
</reference>
<feature type="chain" id="PRO_0000367203" description="UPF0173 metal-dependent hydrolase RHECIAT_CH0001941">
    <location>
        <begin position="1"/>
        <end position="234"/>
    </location>
</feature>
<dbReference type="EMBL" id="CP001074">
    <property type="protein sequence ID" value="ACE90907.1"/>
    <property type="molecule type" value="Genomic_DNA"/>
</dbReference>
<dbReference type="SMR" id="B3PXX1"/>
<dbReference type="KEGG" id="rec:RHECIAT_CH0001941"/>
<dbReference type="eggNOG" id="COG2220">
    <property type="taxonomic scope" value="Bacteria"/>
</dbReference>
<dbReference type="HOGENOM" id="CLU_070010_4_0_5"/>
<dbReference type="Proteomes" id="UP000008817">
    <property type="component" value="Chromosome"/>
</dbReference>
<dbReference type="GO" id="GO:0016787">
    <property type="term" value="F:hydrolase activity"/>
    <property type="evidence" value="ECO:0007669"/>
    <property type="project" value="UniProtKB-UniRule"/>
</dbReference>
<dbReference type="CDD" id="cd06262">
    <property type="entry name" value="metallo-hydrolase-like_MBL-fold"/>
    <property type="match status" value="1"/>
</dbReference>
<dbReference type="Gene3D" id="3.60.15.10">
    <property type="entry name" value="Ribonuclease Z/Hydroxyacylglutathione hydrolase-like"/>
    <property type="match status" value="1"/>
</dbReference>
<dbReference type="HAMAP" id="MF_00457">
    <property type="entry name" value="UPF0173"/>
    <property type="match status" value="1"/>
</dbReference>
<dbReference type="InterPro" id="IPR001279">
    <property type="entry name" value="Metallo-B-lactamas"/>
</dbReference>
<dbReference type="InterPro" id="IPR036866">
    <property type="entry name" value="RibonucZ/Hydroxyglut_hydro"/>
</dbReference>
<dbReference type="InterPro" id="IPR022877">
    <property type="entry name" value="UPF0173"/>
</dbReference>
<dbReference type="InterPro" id="IPR050114">
    <property type="entry name" value="UPF0173_UPF0282_UlaG_hydrolase"/>
</dbReference>
<dbReference type="NCBIfam" id="NF001911">
    <property type="entry name" value="PRK00685.1"/>
    <property type="match status" value="1"/>
</dbReference>
<dbReference type="PANTHER" id="PTHR43546:SF3">
    <property type="entry name" value="UPF0173 METAL-DEPENDENT HYDROLASE MJ1163"/>
    <property type="match status" value="1"/>
</dbReference>
<dbReference type="PANTHER" id="PTHR43546">
    <property type="entry name" value="UPF0173 METAL-DEPENDENT HYDROLASE MJ1163-RELATED"/>
    <property type="match status" value="1"/>
</dbReference>
<dbReference type="Pfam" id="PF12706">
    <property type="entry name" value="Lactamase_B_2"/>
    <property type="match status" value="1"/>
</dbReference>
<dbReference type="SMART" id="SM00849">
    <property type="entry name" value="Lactamase_B"/>
    <property type="match status" value="1"/>
</dbReference>
<dbReference type="SUPFAM" id="SSF56281">
    <property type="entry name" value="Metallo-hydrolase/oxidoreductase"/>
    <property type="match status" value="1"/>
</dbReference>
<keyword id="KW-0378">Hydrolase</keyword>
<evidence type="ECO:0000255" key="1">
    <source>
        <dbReference type="HAMAP-Rule" id="MF_00457"/>
    </source>
</evidence>
<gene>
    <name type="ordered locus">RHECIAT_CH0001941</name>
</gene>
<sequence>MKITWLGHSAFRIETGKAKILLDPFLNHNASFAGQDINDVSSGITHILLTHGHGDHVGDTVALAKETGAVVLANADLAAWLGSKGVDRIEMGNTGGTITLGGFSATFTNALHSSAQITEDGVSHALGNANGLMLHFDDEASIFAMGDTDIFSDMGLINELHQPDIGFVPVGDRFTMGGAVAALACQRYFSFKTAIPCHFGTFPIIDQTADKFIDGMEGSKTQVKALKPAESLSI</sequence>
<proteinExistence type="inferred from homology"/>
<protein>
    <recommendedName>
        <fullName evidence="1">UPF0173 metal-dependent hydrolase RHECIAT_CH0001941</fullName>
    </recommendedName>
</protein>